<evidence type="ECO:0000255" key="1">
    <source>
        <dbReference type="HAMAP-Rule" id="MF_00183"/>
    </source>
</evidence>
<dbReference type="EC" id="1.1.1.267" evidence="1"/>
<dbReference type="EMBL" id="CP001336">
    <property type="protein sequence ID" value="ACL21718.1"/>
    <property type="molecule type" value="Genomic_DNA"/>
</dbReference>
<dbReference type="RefSeq" id="WP_015944739.1">
    <property type="nucleotide sequence ID" value="NC_011830.1"/>
</dbReference>
<dbReference type="SMR" id="B8FR31"/>
<dbReference type="KEGG" id="dhd:Dhaf_3702"/>
<dbReference type="HOGENOM" id="CLU_035714_4_0_9"/>
<dbReference type="UniPathway" id="UPA00056">
    <property type="reaction ID" value="UER00092"/>
</dbReference>
<dbReference type="Proteomes" id="UP000007726">
    <property type="component" value="Chromosome"/>
</dbReference>
<dbReference type="GO" id="GO:0030604">
    <property type="term" value="F:1-deoxy-D-xylulose-5-phosphate reductoisomerase activity"/>
    <property type="evidence" value="ECO:0007669"/>
    <property type="project" value="UniProtKB-UniRule"/>
</dbReference>
<dbReference type="GO" id="GO:0030145">
    <property type="term" value="F:manganese ion binding"/>
    <property type="evidence" value="ECO:0007669"/>
    <property type="project" value="TreeGrafter"/>
</dbReference>
<dbReference type="GO" id="GO:0070402">
    <property type="term" value="F:NADPH binding"/>
    <property type="evidence" value="ECO:0007669"/>
    <property type="project" value="InterPro"/>
</dbReference>
<dbReference type="GO" id="GO:0051484">
    <property type="term" value="P:isopentenyl diphosphate biosynthetic process, methylerythritol 4-phosphate pathway involved in terpenoid biosynthetic process"/>
    <property type="evidence" value="ECO:0007669"/>
    <property type="project" value="TreeGrafter"/>
</dbReference>
<dbReference type="FunFam" id="3.40.50.720:FF:000045">
    <property type="entry name" value="1-deoxy-D-xylulose 5-phosphate reductoisomerase"/>
    <property type="match status" value="1"/>
</dbReference>
<dbReference type="Gene3D" id="1.10.1740.10">
    <property type="match status" value="1"/>
</dbReference>
<dbReference type="Gene3D" id="3.40.50.720">
    <property type="entry name" value="NAD(P)-binding Rossmann-like Domain"/>
    <property type="match status" value="1"/>
</dbReference>
<dbReference type="HAMAP" id="MF_00183">
    <property type="entry name" value="DXP_reductoisom"/>
    <property type="match status" value="1"/>
</dbReference>
<dbReference type="InterPro" id="IPR003821">
    <property type="entry name" value="DXP_reductoisomerase"/>
</dbReference>
<dbReference type="InterPro" id="IPR013644">
    <property type="entry name" value="DXP_reductoisomerase_C"/>
</dbReference>
<dbReference type="InterPro" id="IPR013512">
    <property type="entry name" value="DXP_reductoisomerase_N"/>
</dbReference>
<dbReference type="InterPro" id="IPR026877">
    <property type="entry name" value="DXPR_C"/>
</dbReference>
<dbReference type="InterPro" id="IPR036169">
    <property type="entry name" value="DXPR_C_sf"/>
</dbReference>
<dbReference type="InterPro" id="IPR036291">
    <property type="entry name" value="NAD(P)-bd_dom_sf"/>
</dbReference>
<dbReference type="NCBIfam" id="TIGR00243">
    <property type="entry name" value="Dxr"/>
    <property type="match status" value="1"/>
</dbReference>
<dbReference type="NCBIfam" id="NF009114">
    <property type="entry name" value="PRK12464.1"/>
    <property type="match status" value="1"/>
</dbReference>
<dbReference type="PANTHER" id="PTHR30525">
    <property type="entry name" value="1-DEOXY-D-XYLULOSE 5-PHOSPHATE REDUCTOISOMERASE"/>
    <property type="match status" value="1"/>
</dbReference>
<dbReference type="PANTHER" id="PTHR30525:SF0">
    <property type="entry name" value="1-DEOXY-D-XYLULOSE 5-PHOSPHATE REDUCTOISOMERASE, CHLOROPLASTIC"/>
    <property type="match status" value="1"/>
</dbReference>
<dbReference type="Pfam" id="PF08436">
    <property type="entry name" value="DXP_redisom_C"/>
    <property type="match status" value="1"/>
</dbReference>
<dbReference type="Pfam" id="PF02670">
    <property type="entry name" value="DXP_reductoisom"/>
    <property type="match status" value="1"/>
</dbReference>
<dbReference type="Pfam" id="PF13288">
    <property type="entry name" value="DXPR_C"/>
    <property type="match status" value="1"/>
</dbReference>
<dbReference type="PIRSF" id="PIRSF006205">
    <property type="entry name" value="Dxp_reductismrs"/>
    <property type="match status" value="1"/>
</dbReference>
<dbReference type="SUPFAM" id="SSF69055">
    <property type="entry name" value="1-deoxy-D-xylulose-5-phosphate reductoisomerase, C-terminal domain"/>
    <property type="match status" value="1"/>
</dbReference>
<dbReference type="SUPFAM" id="SSF55347">
    <property type="entry name" value="Glyceraldehyde-3-phosphate dehydrogenase-like, C-terminal domain"/>
    <property type="match status" value="1"/>
</dbReference>
<dbReference type="SUPFAM" id="SSF51735">
    <property type="entry name" value="NAD(P)-binding Rossmann-fold domains"/>
    <property type="match status" value="1"/>
</dbReference>
<proteinExistence type="inferred from homology"/>
<protein>
    <recommendedName>
        <fullName evidence="1">1-deoxy-D-xylulose 5-phosphate reductoisomerase</fullName>
        <shortName evidence="1">DXP reductoisomerase</shortName>
        <ecNumber evidence="1">1.1.1.267</ecNumber>
    </recommendedName>
    <alternativeName>
        <fullName evidence="1">1-deoxyxylulose-5-phosphate reductoisomerase</fullName>
    </alternativeName>
    <alternativeName>
        <fullName evidence="1">2-C-methyl-D-erythritol 4-phosphate synthase</fullName>
    </alternativeName>
</protein>
<name>DXR_DESHD</name>
<reference key="1">
    <citation type="journal article" date="2012" name="BMC Microbiol.">
        <title>Genome sequence of Desulfitobacterium hafniense DCB-2, a Gram-positive anaerobe capable of dehalogenation and metal reduction.</title>
        <authorList>
            <person name="Kim S.H."/>
            <person name="Harzman C."/>
            <person name="Davis J.K."/>
            <person name="Hutcheson R."/>
            <person name="Broderick J.B."/>
            <person name="Marsh T.L."/>
            <person name="Tiedje J.M."/>
        </authorList>
    </citation>
    <scope>NUCLEOTIDE SEQUENCE [LARGE SCALE GENOMIC DNA]</scope>
    <source>
        <strain>DSM 10664 / DCB-2</strain>
    </source>
</reference>
<sequence>MKRLTILGSTGSIGTQTLDIVRQNPEQLEVFALAAGKNVQEIELQAREFKPQIIGLMEEKAARELKQRVADLDIEVVSGMEGLLRTVTDEVPDTVVTAISGRIGLEPTMEALKAGKDIALANKETLVAGGDLVMGTAQRLGRTILPVDSEHSAIFQCLEEDPRTLDKIILTASGGPFRGWSEEQLREVTPERALQHPNWAMGAKITIDSATMMNKGLEVIEAHHLFNMEYDQIDVLIHPQSVIHSMVQYCDGSVLAQCGRPDMRLPIQYALTYPTRWPNPFERLDLRGKTLSFFDPEDYDFPALKLAYACGKRGGTLPAVMNAANEVAVHAFLARRVAYLEIIGLVDKVCSEHDVLDATDLETILNADHWARIRTEELIHS</sequence>
<gene>
    <name evidence="1" type="primary">dxr</name>
    <name type="ordered locus">Dhaf_3702</name>
</gene>
<keyword id="KW-0414">Isoprene biosynthesis</keyword>
<keyword id="KW-0464">Manganese</keyword>
<keyword id="KW-0479">Metal-binding</keyword>
<keyword id="KW-0521">NADP</keyword>
<keyword id="KW-0560">Oxidoreductase</keyword>
<organism>
    <name type="scientific">Desulfitobacterium hafniense (strain DSM 10664 / DCB-2)</name>
    <dbReference type="NCBI Taxonomy" id="272564"/>
    <lineage>
        <taxon>Bacteria</taxon>
        <taxon>Bacillati</taxon>
        <taxon>Bacillota</taxon>
        <taxon>Clostridia</taxon>
        <taxon>Eubacteriales</taxon>
        <taxon>Desulfitobacteriaceae</taxon>
        <taxon>Desulfitobacterium</taxon>
    </lineage>
</organism>
<accession>B8FR31</accession>
<feature type="chain" id="PRO_1000124092" description="1-deoxy-D-xylulose 5-phosphate reductoisomerase">
    <location>
        <begin position="1"/>
        <end position="381"/>
    </location>
</feature>
<feature type="binding site" evidence="1">
    <location>
        <position position="10"/>
    </location>
    <ligand>
        <name>NADPH</name>
        <dbReference type="ChEBI" id="CHEBI:57783"/>
    </ligand>
</feature>
<feature type="binding site" evidence="1">
    <location>
        <position position="11"/>
    </location>
    <ligand>
        <name>NADPH</name>
        <dbReference type="ChEBI" id="CHEBI:57783"/>
    </ligand>
</feature>
<feature type="binding site" evidence="1">
    <location>
        <position position="12"/>
    </location>
    <ligand>
        <name>NADPH</name>
        <dbReference type="ChEBI" id="CHEBI:57783"/>
    </ligand>
</feature>
<feature type="binding site" evidence="1">
    <location>
        <position position="13"/>
    </location>
    <ligand>
        <name>NADPH</name>
        <dbReference type="ChEBI" id="CHEBI:57783"/>
    </ligand>
</feature>
<feature type="binding site" evidence="1">
    <location>
        <position position="36"/>
    </location>
    <ligand>
        <name>NADPH</name>
        <dbReference type="ChEBI" id="CHEBI:57783"/>
    </ligand>
</feature>
<feature type="binding site" evidence="1">
    <location>
        <position position="37"/>
    </location>
    <ligand>
        <name>NADPH</name>
        <dbReference type="ChEBI" id="CHEBI:57783"/>
    </ligand>
</feature>
<feature type="binding site" evidence="1">
    <location>
        <position position="38"/>
    </location>
    <ligand>
        <name>NADPH</name>
        <dbReference type="ChEBI" id="CHEBI:57783"/>
    </ligand>
</feature>
<feature type="binding site" evidence="1">
    <location>
        <position position="122"/>
    </location>
    <ligand>
        <name>NADPH</name>
        <dbReference type="ChEBI" id="CHEBI:57783"/>
    </ligand>
</feature>
<feature type="binding site" evidence="1">
    <location>
        <position position="123"/>
    </location>
    <ligand>
        <name>1-deoxy-D-xylulose 5-phosphate</name>
        <dbReference type="ChEBI" id="CHEBI:57792"/>
    </ligand>
</feature>
<feature type="binding site" evidence="1">
    <location>
        <position position="124"/>
    </location>
    <ligand>
        <name>NADPH</name>
        <dbReference type="ChEBI" id="CHEBI:57783"/>
    </ligand>
</feature>
<feature type="binding site" evidence="1">
    <location>
        <position position="148"/>
    </location>
    <ligand>
        <name>Mn(2+)</name>
        <dbReference type="ChEBI" id="CHEBI:29035"/>
    </ligand>
</feature>
<feature type="binding site" evidence="1">
    <location>
        <position position="149"/>
    </location>
    <ligand>
        <name>1-deoxy-D-xylulose 5-phosphate</name>
        <dbReference type="ChEBI" id="CHEBI:57792"/>
    </ligand>
</feature>
<feature type="binding site" evidence="1">
    <location>
        <position position="150"/>
    </location>
    <ligand>
        <name>1-deoxy-D-xylulose 5-phosphate</name>
        <dbReference type="ChEBI" id="CHEBI:57792"/>
    </ligand>
</feature>
<feature type="binding site" evidence="1">
    <location>
        <position position="150"/>
    </location>
    <ligand>
        <name>Mn(2+)</name>
        <dbReference type="ChEBI" id="CHEBI:29035"/>
    </ligand>
</feature>
<feature type="binding site" evidence="1">
    <location>
        <position position="173"/>
    </location>
    <ligand>
        <name>1-deoxy-D-xylulose 5-phosphate</name>
        <dbReference type="ChEBI" id="CHEBI:57792"/>
    </ligand>
</feature>
<feature type="binding site" evidence="1">
    <location>
        <position position="196"/>
    </location>
    <ligand>
        <name>1-deoxy-D-xylulose 5-phosphate</name>
        <dbReference type="ChEBI" id="CHEBI:57792"/>
    </ligand>
</feature>
<feature type="binding site" evidence="1">
    <location>
        <position position="202"/>
    </location>
    <ligand>
        <name>NADPH</name>
        <dbReference type="ChEBI" id="CHEBI:57783"/>
    </ligand>
</feature>
<feature type="binding site" evidence="1">
    <location>
        <position position="209"/>
    </location>
    <ligand>
        <name>1-deoxy-D-xylulose 5-phosphate</name>
        <dbReference type="ChEBI" id="CHEBI:57792"/>
    </ligand>
</feature>
<feature type="binding site" evidence="1">
    <location>
        <position position="214"/>
    </location>
    <ligand>
        <name>1-deoxy-D-xylulose 5-phosphate</name>
        <dbReference type="ChEBI" id="CHEBI:57792"/>
    </ligand>
</feature>
<feature type="binding site" evidence="1">
    <location>
        <position position="215"/>
    </location>
    <ligand>
        <name>1-deoxy-D-xylulose 5-phosphate</name>
        <dbReference type="ChEBI" id="CHEBI:57792"/>
    </ligand>
</feature>
<feature type="binding site" evidence="1">
    <location>
        <position position="218"/>
    </location>
    <ligand>
        <name>1-deoxy-D-xylulose 5-phosphate</name>
        <dbReference type="ChEBI" id="CHEBI:57792"/>
    </ligand>
</feature>
<feature type="binding site" evidence="1">
    <location>
        <position position="218"/>
    </location>
    <ligand>
        <name>Mn(2+)</name>
        <dbReference type="ChEBI" id="CHEBI:29035"/>
    </ligand>
</feature>
<comment type="function">
    <text evidence="1">Catalyzes the NADPH-dependent rearrangement and reduction of 1-deoxy-D-xylulose-5-phosphate (DXP) to 2-C-methyl-D-erythritol 4-phosphate (MEP).</text>
</comment>
<comment type="catalytic activity">
    <reaction evidence="1">
        <text>2-C-methyl-D-erythritol 4-phosphate + NADP(+) = 1-deoxy-D-xylulose 5-phosphate + NADPH + H(+)</text>
        <dbReference type="Rhea" id="RHEA:13717"/>
        <dbReference type="ChEBI" id="CHEBI:15378"/>
        <dbReference type="ChEBI" id="CHEBI:57783"/>
        <dbReference type="ChEBI" id="CHEBI:57792"/>
        <dbReference type="ChEBI" id="CHEBI:58262"/>
        <dbReference type="ChEBI" id="CHEBI:58349"/>
        <dbReference type="EC" id="1.1.1.267"/>
    </reaction>
    <physiologicalReaction direction="right-to-left" evidence="1">
        <dbReference type="Rhea" id="RHEA:13719"/>
    </physiologicalReaction>
</comment>
<comment type="cofactor">
    <cofactor evidence="1">
        <name>Mg(2+)</name>
        <dbReference type="ChEBI" id="CHEBI:18420"/>
    </cofactor>
    <cofactor evidence="1">
        <name>Mn(2+)</name>
        <dbReference type="ChEBI" id="CHEBI:29035"/>
    </cofactor>
</comment>
<comment type="pathway">
    <text evidence="1">Isoprenoid biosynthesis; isopentenyl diphosphate biosynthesis via DXP pathway; isopentenyl diphosphate from 1-deoxy-D-xylulose 5-phosphate: step 1/6.</text>
</comment>
<comment type="similarity">
    <text evidence="1">Belongs to the DXR family.</text>
</comment>